<organism>
    <name type="scientific">Methanococcus maripaludis (strain C5 / ATCC BAA-1333)</name>
    <dbReference type="NCBI Taxonomy" id="402880"/>
    <lineage>
        <taxon>Archaea</taxon>
        <taxon>Methanobacteriati</taxon>
        <taxon>Methanobacteriota</taxon>
        <taxon>Methanomada group</taxon>
        <taxon>Methanococci</taxon>
        <taxon>Methanococcales</taxon>
        <taxon>Methanococcaceae</taxon>
        <taxon>Methanococcus</taxon>
    </lineage>
</organism>
<proteinExistence type="inferred from homology"/>
<reference key="1">
    <citation type="submission" date="2007-03" db="EMBL/GenBank/DDBJ databases">
        <title>Complete sequence of chromosome of Methanococcus maripaludis C5.</title>
        <authorList>
            <consortium name="US DOE Joint Genome Institute"/>
            <person name="Copeland A."/>
            <person name="Lucas S."/>
            <person name="Lapidus A."/>
            <person name="Barry K."/>
            <person name="Glavina del Rio T."/>
            <person name="Dalin E."/>
            <person name="Tice H."/>
            <person name="Pitluck S."/>
            <person name="Chertkov O."/>
            <person name="Brettin T."/>
            <person name="Bruce D."/>
            <person name="Han C."/>
            <person name="Detter J.C."/>
            <person name="Schmutz J."/>
            <person name="Larimer F."/>
            <person name="Land M."/>
            <person name="Hauser L."/>
            <person name="Kyrpides N."/>
            <person name="Mikhailova N."/>
            <person name="Sieprawska-Lupa M."/>
            <person name="Whitman W.B."/>
            <person name="Richardson P."/>
        </authorList>
    </citation>
    <scope>NUCLEOTIDE SEQUENCE [LARGE SCALE GENOMIC DNA]</scope>
    <source>
        <strain>C5 / ATCC BAA-1333</strain>
    </source>
</reference>
<evidence type="ECO:0000255" key="1">
    <source>
        <dbReference type="HAMAP-Rule" id="MF_00512"/>
    </source>
</evidence>
<evidence type="ECO:0000305" key="2"/>
<keyword id="KW-0687">Ribonucleoprotein</keyword>
<keyword id="KW-0689">Ribosomal protein</keyword>
<name>RS6E_METM5</name>
<feature type="chain" id="PRO_1000050636" description="Small ribosomal subunit protein eS6">
    <location>
        <begin position="1"/>
        <end position="124"/>
    </location>
</feature>
<protein>
    <recommendedName>
        <fullName evidence="1">Small ribosomal subunit protein eS6</fullName>
    </recommendedName>
    <alternativeName>
        <fullName evidence="2">30S ribosomal protein S6e</fullName>
    </alternativeName>
</protein>
<sequence>MAFKVVVSDSKTGKSYQFETESTALIGKKIGDEISGSVVELEGYKLKITGGSDKCGFAMRHDIHGAMKMRVLLKSGPGYNVKEKGLRRRKSLRGNTISKDITLINTKVVEYGSAPLGGEPESIE</sequence>
<comment type="similarity">
    <text evidence="1">Belongs to the eukaryotic ribosomal protein eS6 family.</text>
</comment>
<accession>A4FWX0</accession>
<dbReference type="EMBL" id="CP000609">
    <property type="protein sequence ID" value="ABO34699.1"/>
    <property type="molecule type" value="Genomic_DNA"/>
</dbReference>
<dbReference type="RefSeq" id="WP_011868154.1">
    <property type="nucleotide sequence ID" value="NC_009135.1"/>
</dbReference>
<dbReference type="SMR" id="A4FWX0"/>
<dbReference type="STRING" id="402880.MmarC5_0383"/>
<dbReference type="GeneID" id="4928907"/>
<dbReference type="KEGG" id="mmq:MmarC5_0383"/>
<dbReference type="eggNOG" id="arCOG01946">
    <property type="taxonomic scope" value="Archaea"/>
</dbReference>
<dbReference type="HOGENOM" id="CLU_109671_1_1_2"/>
<dbReference type="OrthoDB" id="7793at2157"/>
<dbReference type="Proteomes" id="UP000000253">
    <property type="component" value="Chromosome"/>
</dbReference>
<dbReference type="GO" id="GO:1990904">
    <property type="term" value="C:ribonucleoprotein complex"/>
    <property type="evidence" value="ECO:0007669"/>
    <property type="project" value="UniProtKB-KW"/>
</dbReference>
<dbReference type="GO" id="GO:0005840">
    <property type="term" value="C:ribosome"/>
    <property type="evidence" value="ECO:0007669"/>
    <property type="project" value="UniProtKB-KW"/>
</dbReference>
<dbReference type="GO" id="GO:0003735">
    <property type="term" value="F:structural constituent of ribosome"/>
    <property type="evidence" value="ECO:0007669"/>
    <property type="project" value="InterPro"/>
</dbReference>
<dbReference type="GO" id="GO:0006412">
    <property type="term" value="P:translation"/>
    <property type="evidence" value="ECO:0007669"/>
    <property type="project" value="UniProtKB-UniRule"/>
</dbReference>
<dbReference type="HAMAP" id="MF_00512">
    <property type="entry name" value="Ribosomal_eS6"/>
    <property type="match status" value="1"/>
</dbReference>
<dbReference type="InterPro" id="IPR001377">
    <property type="entry name" value="Ribosomal_eS6"/>
</dbReference>
<dbReference type="InterPro" id="IPR020924">
    <property type="entry name" value="Ribosomal_eS6_arc"/>
</dbReference>
<dbReference type="NCBIfam" id="NF003294">
    <property type="entry name" value="PRK04290.1-3"/>
    <property type="match status" value="1"/>
</dbReference>
<dbReference type="PANTHER" id="PTHR11502">
    <property type="entry name" value="40S RIBOSOMAL PROTEIN S6"/>
    <property type="match status" value="1"/>
</dbReference>
<dbReference type="Pfam" id="PF01092">
    <property type="entry name" value="Ribosomal_S6e"/>
    <property type="match status" value="1"/>
</dbReference>
<dbReference type="SMART" id="SM01405">
    <property type="entry name" value="Ribosomal_S6e"/>
    <property type="match status" value="1"/>
</dbReference>
<gene>
    <name evidence="1" type="primary">rps6e</name>
    <name type="ordered locus">MmarC5_0383</name>
</gene>